<dbReference type="EC" id="5.4.99.27" evidence="1"/>
<dbReference type="EMBL" id="CP000127">
    <property type="protein sequence ID" value="ABA57369.1"/>
    <property type="molecule type" value="Genomic_DNA"/>
</dbReference>
<dbReference type="RefSeq" id="WP_011330496.1">
    <property type="nucleotide sequence ID" value="NC_007484.1"/>
</dbReference>
<dbReference type="SMR" id="Q3JCS7"/>
<dbReference type="FunCoup" id="Q3JCS7">
    <property type="interactions" value="65"/>
</dbReference>
<dbReference type="STRING" id="323261.Noc_0856"/>
<dbReference type="KEGG" id="noc:Noc_0856"/>
<dbReference type="eggNOG" id="COG0585">
    <property type="taxonomic scope" value="Bacteria"/>
</dbReference>
<dbReference type="HOGENOM" id="CLU_005281_4_0_6"/>
<dbReference type="InParanoid" id="Q3JCS7"/>
<dbReference type="Proteomes" id="UP000006838">
    <property type="component" value="Chromosome"/>
</dbReference>
<dbReference type="GO" id="GO:0005829">
    <property type="term" value="C:cytosol"/>
    <property type="evidence" value="ECO:0007669"/>
    <property type="project" value="TreeGrafter"/>
</dbReference>
<dbReference type="GO" id="GO:0003723">
    <property type="term" value="F:RNA binding"/>
    <property type="evidence" value="ECO:0007669"/>
    <property type="project" value="InterPro"/>
</dbReference>
<dbReference type="GO" id="GO:0160150">
    <property type="term" value="F:tRNA pseudouridine(13) synthase activity"/>
    <property type="evidence" value="ECO:0007669"/>
    <property type="project" value="UniProtKB-EC"/>
</dbReference>
<dbReference type="GO" id="GO:0031119">
    <property type="term" value="P:tRNA pseudouridine synthesis"/>
    <property type="evidence" value="ECO:0007669"/>
    <property type="project" value="UniProtKB-UniRule"/>
</dbReference>
<dbReference type="Gene3D" id="3.30.2350.20">
    <property type="entry name" value="TruD, catalytic domain"/>
    <property type="match status" value="1"/>
</dbReference>
<dbReference type="Gene3D" id="3.30.2340.10">
    <property type="entry name" value="TruD, insertion domain"/>
    <property type="match status" value="1"/>
</dbReference>
<dbReference type="HAMAP" id="MF_01082">
    <property type="entry name" value="TruD"/>
    <property type="match status" value="1"/>
</dbReference>
<dbReference type="InterPro" id="IPR020103">
    <property type="entry name" value="PsdUridine_synth_cat_dom_sf"/>
</dbReference>
<dbReference type="InterPro" id="IPR001656">
    <property type="entry name" value="PsdUridine_synth_TruD"/>
</dbReference>
<dbReference type="InterPro" id="IPR020119">
    <property type="entry name" value="PsdUridine_synth_TruD_CS"/>
</dbReference>
<dbReference type="InterPro" id="IPR011760">
    <property type="entry name" value="PsdUridine_synth_TruD_insert"/>
</dbReference>
<dbReference type="InterPro" id="IPR042214">
    <property type="entry name" value="TruD_catalytic"/>
</dbReference>
<dbReference type="InterPro" id="IPR043165">
    <property type="entry name" value="TruD_insert_sf"/>
</dbReference>
<dbReference type="InterPro" id="IPR050170">
    <property type="entry name" value="TruD_pseudoU_synthase"/>
</dbReference>
<dbReference type="NCBIfam" id="NF002153">
    <property type="entry name" value="PRK00984.1-2"/>
    <property type="match status" value="1"/>
</dbReference>
<dbReference type="PANTHER" id="PTHR47811">
    <property type="entry name" value="TRNA PSEUDOURIDINE SYNTHASE D"/>
    <property type="match status" value="1"/>
</dbReference>
<dbReference type="PANTHER" id="PTHR47811:SF1">
    <property type="entry name" value="TRNA PSEUDOURIDINE SYNTHASE D"/>
    <property type="match status" value="1"/>
</dbReference>
<dbReference type="Pfam" id="PF01142">
    <property type="entry name" value="TruD"/>
    <property type="match status" value="2"/>
</dbReference>
<dbReference type="SUPFAM" id="SSF55120">
    <property type="entry name" value="Pseudouridine synthase"/>
    <property type="match status" value="1"/>
</dbReference>
<dbReference type="PROSITE" id="PS50984">
    <property type="entry name" value="TRUD"/>
    <property type="match status" value="1"/>
</dbReference>
<dbReference type="PROSITE" id="PS01268">
    <property type="entry name" value="UPF0024"/>
    <property type="match status" value="1"/>
</dbReference>
<accession>Q3JCS7</accession>
<keyword id="KW-0413">Isomerase</keyword>
<keyword id="KW-1185">Reference proteome</keyword>
<keyword id="KW-0819">tRNA processing</keyword>
<comment type="function">
    <text evidence="1">Responsible for synthesis of pseudouridine from uracil-13 in transfer RNAs.</text>
</comment>
<comment type="catalytic activity">
    <reaction evidence="1">
        <text>uridine(13) in tRNA = pseudouridine(13) in tRNA</text>
        <dbReference type="Rhea" id="RHEA:42540"/>
        <dbReference type="Rhea" id="RHEA-COMP:10105"/>
        <dbReference type="Rhea" id="RHEA-COMP:10106"/>
        <dbReference type="ChEBI" id="CHEBI:65314"/>
        <dbReference type="ChEBI" id="CHEBI:65315"/>
        <dbReference type="EC" id="5.4.99.27"/>
    </reaction>
</comment>
<comment type="similarity">
    <text evidence="1">Belongs to the pseudouridine synthase TruD family.</text>
</comment>
<feature type="chain" id="PRO_0000230142" description="tRNA pseudouridine synthase D">
    <location>
        <begin position="1"/>
        <end position="358"/>
    </location>
</feature>
<feature type="domain" description="TRUD" evidence="1">
    <location>
        <begin position="161"/>
        <end position="312"/>
    </location>
</feature>
<feature type="active site" description="Nucleophile" evidence="1">
    <location>
        <position position="84"/>
    </location>
</feature>
<sequence length="358" mass="40271">MEADEAGQQVLAYGGDPPLATALLRCRPEDFQVVEELPFALSGEGEHVWLLLCKRNTNTVWLARQLARIAGVRLVDVGYAGLKDRHGLTTQWFSVNLSGKKEPAWATALESATVQVLKVIRHSRKLQRGALKGNRFLLTLRHFQGDREVVCDRLTQIKVAGTPNYFGPQRFGRGGQNLDQVHRWFSGGKPPRGRYLRGMLLSAARAFLFNRVLSERVQAANWWQPLPGEALILDGSHGFFVAETIDEALQARVRRFDCHPSGPLWGRGESPAKRMSRALEEEVLADYALWREGLEQAGLKQERRSLRLMVADLEWSFPPAMDSLQLHFRLPAGAYATTVLREVVRTQEAVGQPFLLDE</sequence>
<gene>
    <name evidence="1" type="primary">truD</name>
    <name type="ordered locus">Noc_0856</name>
</gene>
<evidence type="ECO:0000255" key="1">
    <source>
        <dbReference type="HAMAP-Rule" id="MF_01082"/>
    </source>
</evidence>
<reference key="1">
    <citation type="journal article" date="2006" name="Appl. Environ. Microbiol.">
        <title>Complete genome sequence of the marine, chemolithoautotrophic, ammonia-oxidizing bacterium Nitrosococcus oceani ATCC 19707.</title>
        <authorList>
            <person name="Klotz M.G."/>
            <person name="Arp D.J."/>
            <person name="Chain P.S.G."/>
            <person name="El-Sheikh A.F."/>
            <person name="Hauser L.J."/>
            <person name="Hommes N.G."/>
            <person name="Larimer F.W."/>
            <person name="Malfatti S.A."/>
            <person name="Norton J.M."/>
            <person name="Poret-Peterson A.T."/>
            <person name="Vergez L.M."/>
            <person name="Ward B.B."/>
        </authorList>
    </citation>
    <scope>NUCLEOTIDE SEQUENCE [LARGE SCALE GENOMIC DNA]</scope>
    <source>
        <strain>ATCC 19707 / BCRC 17464 / JCM 30415 / NCIMB 11848 / C-107</strain>
    </source>
</reference>
<name>TRUD_NITOC</name>
<proteinExistence type="inferred from homology"/>
<organism>
    <name type="scientific">Nitrosococcus oceani (strain ATCC 19707 / BCRC 17464 / JCM 30415 / NCIMB 11848 / C-107)</name>
    <dbReference type="NCBI Taxonomy" id="323261"/>
    <lineage>
        <taxon>Bacteria</taxon>
        <taxon>Pseudomonadati</taxon>
        <taxon>Pseudomonadota</taxon>
        <taxon>Gammaproteobacteria</taxon>
        <taxon>Chromatiales</taxon>
        <taxon>Chromatiaceae</taxon>
        <taxon>Nitrosococcus</taxon>
    </lineage>
</organism>
<protein>
    <recommendedName>
        <fullName evidence="1">tRNA pseudouridine synthase D</fullName>
        <ecNumber evidence="1">5.4.99.27</ecNumber>
    </recommendedName>
    <alternativeName>
        <fullName evidence="1">tRNA pseudouridine(13) synthase</fullName>
    </alternativeName>
    <alternativeName>
        <fullName evidence="1">tRNA pseudouridylate synthase D</fullName>
    </alternativeName>
    <alternativeName>
        <fullName evidence="1">tRNA-uridine isomerase D</fullName>
    </alternativeName>
</protein>